<proteinExistence type="inferred from homology"/>
<reference key="1">
    <citation type="journal article" date="2011" name="J. Bacteriol.">
        <title>Complete genome sequence of the plant growth-promoting endophyte Burkholderia phytofirmans strain PsJN.</title>
        <authorList>
            <person name="Weilharter A."/>
            <person name="Mitter B."/>
            <person name="Shin M.V."/>
            <person name="Chain P.S."/>
            <person name="Nowak J."/>
            <person name="Sessitsch A."/>
        </authorList>
    </citation>
    <scope>NUCLEOTIDE SEQUENCE [LARGE SCALE GENOMIC DNA]</scope>
    <source>
        <strain>DSM 17436 / LMG 22146 / PsJN</strain>
    </source>
</reference>
<keyword id="KW-0328">Glycosyltransferase</keyword>
<keyword id="KW-0441">Lipid A biosynthesis</keyword>
<keyword id="KW-0444">Lipid biosynthesis</keyword>
<keyword id="KW-0443">Lipid metabolism</keyword>
<keyword id="KW-0808">Transferase</keyword>
<organism>
    <name type="scientific">Paraburkholderia phytofirmans (strain DSM 17436 / LMG 22146 / PsJN)</name>
    <name type="common">Burkholderia phytofirmans</name>
    <dbReference type="NCBI Taxonomy" id="398527"/>
    <lineage>
        <taxon>Bacteria</taxon>
        <taxon>Pseudomonadati</taxon>
        <taxon>Pseudomonadota</taxon>
        <taxon>Betaproteobacteria</taxon>
        <taxon>Burkholderiales</taxon>
        <taxon>Burkholderiaceae</taxon>
        <taxon>Paraburkholderia</taxon>
    </lineage>
</organism>
<protein>
    <recommendedName>
        <fullName evidence="1">Lipid-A-disaccharide synthase</fullName>
        <ecNumber evidence="1">2.4.1.182</ecNumber>
    </recommendedName>
</protein>
<sequence>MALQPSPLRVAMVAGEPSGDLLAASLLDGLTSRLPAGTQYYGIGGPRMIATGFDAHFPMEKLSVRGYVEALKHIPGILGIRNELKRQLLAEPPSVFVGVDAPDFNFGLEHPLREAGIPTVHFVCPSIWAWRGGRIKKIAKAVDHMLCVFPFETALLEKAGVAASYVGHPLADEIPLVPDTLGARRALGLAQDGPIIAVLPGSRRSEIDLIGPTFFAAMEMMQHQEPNLRFVMPAATPALREMLRPLVDSHPGLALTITDGQAQLAMTAADAILVKSGTVTLEAALLKKPMVISYKVPWLTGQIMRRQGYLPYVGLPNILAGRFVVPEILQHFATPQALAEATLKQLRDETNRRTLTEIFTEMHHVLKQNTAQRAAEVVASVIEKRKGRP</sequence>
<name>LPXB_PARPJ</name>
<dbReference type="EC" id="2.4.1.182" evidence="1"/>
<dbReference type="EMBL" id="CP001052">
    <property type="protein sequence ID" value="ACD16838.1"/>
    <property type="molecule type" value="Genomic_DNA"/>
</dbReference>
<dbReference type="RefSeq" id="WP_012433435.1">
    <property type="nucleotide sequence ID" value="NC_010681.1"/>
</dbReference>
<dbReference type="SMR" id="B2T5I1"/>
<dbReference type="STRING" id="398527.Bphyt_2442"/>
<dbReference type="CAZy" id="GT19">
    <property type="family name" value="Glycosyltransferase Family 19"/>
</dbReference>
<dbReference type="KEGG" id="bpy:Bphyt_2442"/>
<dbReference type="eggNOG" id="COG0763">
    <property type="taxonomic scope" value="Bacteria"/>
</dbReference>
<dbReference type="HOGENOM" id="CLU_036577_3_0_4"/>
<dbReference type="OrthoDB" id="9801642at2"/>
<dbReference type="UniPathway" id="UPA00973"/>
<dbReference type="Proteomes" id="UP000001739">
    <property type="component" value="Chromosome 1"/>
</dbReference>
<dbReference type="GO" id="GO:0016020">
    <property type="term" value="C:membrane"/>
    <property type="evidence" value="ECO:0007669"/>
    <property type="project" value="GOC"/>
</dbReference>
<dbReference type="GO" id="GO:0008915">
    <property type="term" value="F:lipid-A-disaccharide synthase activity"/>
    <property type="evidence" value="ECO:0007669"/>
    <property type="project" value="UniProtKB-UniRule"/>
</dbReference>
<dbReference type="GO" id="GO:0005543">
    <property type="term" value="F:phospholipid binding"/>
    <property type="evidence" value="ECO:0007669"/>
    <property type="project" value="TreeGrafter"/>
</dbReference>
<dbReference type="GO" id="GO:0009245">
    <property type="term" value="P:lipid A biosynthetic process"/>
    <property type="evidence" value="ECO:0007669"/>
    <property type="project" value="UniProtKB-UniRule"/>
</dbReference>
<dbReference type="Gene3D" id="3.40.50.2000">
    <property type="entry name" value="Glycogen Phosphorylase B"/>
    <property type="match status" value="2"/>
</dbReference>
<dbReference type="HAMAP" id="MF_00392">
    <property type="entry name" value="LpxB"/>
    <property type="match status" value="1"/>
</dbReference>
<dbReference type="InterPro" id="IPR003835">
    <property type="entry name" value="Glyco_trans_19"/>
</dbReference>
<dbReference type="NCBIfam" id="TIGR00215">
    <property type="entry name" value="lpxB"/>
    <property type="match status" value="1"/>
</dbReference>
<dbReference type="PANTHER" id="PTHR30372">
    <property type="entry name" value="LIPID-A-DISACCHARIDE SYNTHASE"/>
    <property type="match status" value="1"/>
</dbReference>
<dbReference type="PANTHER" id="PTHR30372:SF4">
    <property type="entry name" value="LIPID-A-DISACCHARIDE SYNTHASE, MITOCHONDRIAL-RELATED"/>
    <property type="match status" value="1"/>
</dbReference>
<dbReference type="Pfam" id="PF02684">
    <property type="entry name" value="LpxB"/>
    <property type="match status" value="1"/>
</dbReference>
<dbReference type="SUPFAM" id="SSF53756">
    <property type="entry name" value="UDP-Glycosyltransferase/glycogen phosphorylase"/>
    <property type="match status" value="1"/>
</dbReference>
<accession>B2T5I1</accession>
<gene>
    <name evidence="1" type="primary">lpxB</name>
    <name type="ordered locus">Bphyt_2442</name>
</gene>
<comment type="function">
    <text evidence="1">Condensation of UDP-2,3-diacylglucosamine and 2,3-diacylglucosamine-1-phosphate to form lipid A disaccharide, a precursor of lipid A, a phosphorylated glycolipid that anchors the lipopolysaccharide to the outer membrane of the cell.</text>
</comment>
<comment type="catalytic activity">
    <reaction evidence="1">
        <text>a lipid X + a UDP-2-N,3-O-bis[(3R)-3-hydroxyacyl]-alpha-D-glucosamine = a lipid A disaccharide + UDP + H(+)</text>
        <dbReference type="Rhea" id="RHEA:67828"/>
        <dbReference type="ChEBI" id="CHEBI:15378"/>
        <dbReference type="ChEBI" id="CHEBI:58223"/>
        <dbReference type="ChEBI" id="CHEBI:137748"/>
        <dbReference type="ChEBI" id="CHEBI:176338"/>
        <dbReference type="ChEBI" id="CHEBI:176343"/>
        <dbReference type="EC" id="2.4.1.182"/>
    </reaction>
</comment>
<comment type="pathway">
    <text evidence="1">Bacterial outer membrane biogenesis; LPS lipid A biosynthesis.</text>
</comment>
<comment type="similarity">
    <text evidence="1">Belongs to the LpxB family.</text>
</comment>
<feature type="chain" id="PRO_1000191468" description="Lipid-A-disaccharide synthase">
    <location>
        <begin position="1"/>
        <end position="389"/>
    </location>
</feature>
<evidence type="ECO:0000255" key="1">
    <source>
        <dbReference type="HAMAP-Rule" id="MF_00392"/>
    </source>
</evidence>